<protein>
    <recommendedName>
        <fullName evidence="1">Chaperonin GroEL</fullName>
        <ecNumber evidence="1">5.6.1.7</ecNumber>
    </recommendedName>
    <alternativeName>
        <fullName evidence="1">60 kDa chaperonin</fullName>
    </alternativeName>
    <alternativeName>
        <fullName evidence="1">Chaperonin-60</fullName>
        <shortName evidence="1">Cpn60</shortName>
    </alternativeName>
</protein>
<comment type="function">
    <text evidence="1">Together with its co-chaperonin GroES, plays an essential role in assisting protein folding. The GroEL-GroES system forms a nano-cage that allows encapsulation of the non-native substrate proteins and provides a physical environment optimized to promote and accelerate protein folding.</text>
</comment>
<comment type="catalytic activity">
    <reaction evidence="1">
        <text>ATP + H2O + a folded polypeptide = ADP + phosphate + an unfolded polypeptide.</text>
        <dbReference type="EC" id="5.6.1.7"/>
    </reaction>
</comment>
<comment type="subunit">
    <text evidence="1">Forms a cylinder of 14 subunits composed of two heptameric rings stacked back-to-back. Interacts with the co-chaperonin GroES.</text>
</comment>
<comment type="subcellular location">
    <subcellularLocation>
        <location evidence="1">Cytoplasm</location>
    </subcellularLocation>
</comment>
<comment type="similarity">
    <text evidence="1">Belongs to the chaperonin (HSP60) family.</text>
</comment>
<feature type="chain" id="PRO_0000063315" description="Chaperonin GroEL">
    <location>
        <begin position="1"/>
        <end position="553"/>
    </location>
</feature>
<feature type="binding site" evidence="1">
    <location>
        <begin position="30"/>
        <end position="33"/>
    </location>
    <ligand>
        <name>ATP</name>
        <dbReference type="ChEBI" id="CHEBI:30616"/>
    </ligand>
</feature>
<feature type="binding site" evidence="1">
    <location>
        <position position="51"/>
    </location>
    <ligand>
        <name>ATP</name>
        <dbReference type="ChEBI" id="CHEBI:30616"/>
    </ligand>
</feature>
<feature type="binding site" evidence="1">
    <location>
        <begin position="87"/>
        <end position="91"/>
    </location>
    <ligand>
        <name>ATP</name>
        <dbReference type="ChEBI" id="CHEBI:30616"/>
    </ligand>
</feature>
<feature type="binding site" evidence="1">
    <location>
        <position position="415"/>
    </location>
    <ligand>
        <name>ATP</name>
        <dbReference type="ChEBI" id="CHEBI:30616"/>
    </ligand>
</feature>
<feature type="binding site" evidence="1">
    <location>
        <position position="495"/>
    </location>
    <ligand>
        <name>ATP</name>
        <dbReference type="ChEBI" id="CHEBI:30616"/>
    </ligand>
</feature>
<proteinExistence type="inferred from homology"/>
<accession>Q8KIX1</accession>
<organism>
    <name type="scientific">Buchnera aphidicola subsp. Tuberolachnus salignus</name>
    <dbReference type="NCBI Taxonomy" id="98804"/>
    <lineage>
        <taxon>Bacteria</taxon>
        <taxon>Pseudomonadati</taxon>
        <taxon>Pseudomonadota</taxon>
        <taxon>Gammaproteobacteria</taxon>
        <taxon>Enterobacterales</taxon>
        <taxon>Erwiniaceae</taxon>
        <taxon>Buchnera</taxon>
    </lineage>
</organism>
<evidence type="ECO:0000255" key="1">
    <source>
        <dbReference type="HAMAP-Rule" id="MF_00600"/>
    </source>
</evidence>
<name>CH60_BUCTT</name>
<keyword id="KW-0067">ATP-binding</keyword>
<keyword id="KW-0143">Chaperone</keyword>
<keyword id="KW-0963">Cytoplasm</keyword>
<keyword id="KW-0413">Isomerase</keyword>
<keyword id="KW-0547">Nucleotide-binding</keyword>
<sequence>MAAKEVKFGNDARAKMLRGVNVLADAVKVTLGPKGRNVVLDKSFGAPTITKDGVSVAREIELEDKFENMGTQMVKEVASKANDAAGDGTTTATVLAQSIITEGLKAVAAGMNPMDLKRGIDKAVIAAVEELRKLSVPCSDSKAIAQVGTISANSDLTVGKLIAEAMGKVGKEGVITVEEGTGLQDELDVVEGMQFDRGYLSPYFINKPESGAVELENPFILLADKKISNIRELLPILEAVAKAGKSLLIIAEDVEGEALATLIVNTMRGIVKVAAVKAPGFGDRRKAMLQDIATLTGGTVISEEIGLELEKTILDDLGQAKRVVINKDTTIIIDGIGNEINIKGRIAQIHQQIEEATSDYVKEKLQERVAKLADGVAVIKVGAATEVELKEKKGRVEDALHATRAAVEEGVVAGGGVALIRVAGKISNLTGDNEDQNVGIKVALRAMESPLRQIVINAGEEASVIANNVKACEGSYGYNAYTEEYGDMISMGILDPTKVTRSALQYAASVAGLMITTECMITDLPKGETPDLNNSGGMGGGMGGGMGGMGGMM</sequence>
<dbReference type="EC" id="5.6.1.7" evidence="1"/>
<dbReference type="EMBL" id="AJ439086">
    <property type="protein sequence ID" value="CAD27798.1"/>
    <property type="molecule type" value="Genomic_DNA"/>
</dbReference>
<dbReference type="SMR" id="Q8KIX1"/>
<dbReference type="STRING" id="98804.BTSPAZIEG_0011"/>
<dbReference type="GO" id="GO:0005737">
    <property type="term" value="C:cytoplasm"/>
    <property type="evidence" value="ECO:0007669"/>
    <property type="project" value="UniProtKB-SubCell"/>
</dbReference>
<dbReference type="GO" id="GO:0005524">
    <property type="term" value="F:ATP binding"/>
    <property type="evidence" value="ECO:0007669"/>
    <property type="project" value="UniProtKB-UniRule"/>
</dbReference>
<dbReference type="GO" id="GO:0140662">
    <property type="term" value="F:ATP-dependent protein folding chaperone"/>
    <property type="evidence" value="ECO:0007669"/>
    <property type="project" value="InterPro"/>
</dbReference>
<dbReference type="GO" id="GO:0016853">
    <property type="term" value="F:isomerase activity"/>
    <property type="evidence" value="ECO:0007669"/>
    <property type="project" value="UniProtKB-KW"/>
</dbReference>
<dbReference type="GO" id="GO:0051082">
    <property type="term" value="F:unfolded protein binding"/>
    <property type="evidence" value="ECO:0007669"/>
    <property type="project" value="UniProtKB-UniRule"/>
</dbReference>
<dbReference type="GO" id="GO:0042026">
    <property type="term" value="P:protein refolding"/>
    <property type="evidence" value="ECO:0007669"/>
    <property type="project" value="UniProtKB-UniRule"/>
</dbReference>
<dbReference type="CDD" id="cd03344">
    <property type="entry name" value="GroEL"/>
    <property type="match status" value="1"/>
</dbReference>
<dbReference type="FunFam" id="1.10.560.10:FF:000001">
    <property type="entry name" value="60 kDa chaperonin"/>
    <property type="match status" value="1"/>
</dbReference>
<dbReference type="FunFam" id="3.50.7.10:FF:000001">
    <property type="entry name" value="60 kDa chaperonin"/>
    <property type="match status" value="1"/>
</dbReference>
<dbReference type="Gene3D" id="3.50.7.10">
    <property type="entry name" value="GroEL"/>
    <property type="match status" value="1"/>
</dbReference>
<dbReference type="Gene3D" id="1.10.560.10">
    <property type="entry name" value="GroEL-like equatorial domain"/>
    <property type="match status" value="1"/>
</dbReference>
<dbReference type="Gene3D" id="3.30.260.10">
    <property type="entry name" value="TCP-1-like chaperonin intermediate domain"/>
    <property type="match status" value="1"/>
</dbReference>
<dbReference type="HAMAP" id="MF_00600">
    <property type="entry name" value="CH60"/>
    <property type="match status" value="1"/>
</dbReference>
<dbReference type="InterPro" id="IPR018370">
    <property type="entry name" value="Chaperonin_Cpn60_CS"/>
</dbReference>
<dbReference type="InterPro" id="IPR001844">
    <property type="entry name" value="Cpn60/GroEL"/>
</dbReference>
<dbReference type="InterPro" id="IPR002423">
    <property type="entry name" value="Cpn60/GroEL/TCP-1"/>
</dbReference>
<dbReference type="InterPro" id="IPR027409">
    <property type="entry name" value="GroEL-like_apical_dom_sf"/>
</dbReference>
<dbReference type="InterPro" id="IPR027413">
    <property type="entry name" value="GROEL-like_equatorial_sf"/>
</dbReference>
<dbReference type="InterPro" id="IPR027410">
    <property type="entry name" value="TCP-1-like_intermed_sf"/>
</dbReference>
<dbReference type="NCBIfam" id="TIGR02348">
    <property type="entry name" value="GroEL"/>
    <property type="match status" value="1"/>
</dbReference>
<dbReference type="NCBIfam" id="NF000592">
    <property type="entry name" value="PRK00013.1"/>
    <property type="match status" value="1"/>
</dbReference>
<dbReference type="NCBIfam" id="NF009487">
    <property type="entry name" value="PRK12849.1"/>
    <property type="match status" value="1"/>
</dbReference>
<dbReference type="NCBIfam" id="NF009488">
    <property type="entry name" value="PRK12850.1"/>
    <property type="match status" value="1"/>
</dbReference>
<dbReference type="NCBIfam" id="NF009489">
    <property type="entry name" value="PRK12851.1"/>
    <property type="match status" value="1"/>
</dbReference>
<dbReference type="PANTHER" id="PTHR45633">
    <property type="entry name" value="60 KDA HEAT SHOCK PROTEIN, MITOCHONDRIAL"/>
    <property type="match status" value="1"/>
</dbReference>
<dbReference type="Pfam" id="PF00118">
    <property type="entry name" value="Cpn60_TCP1"/>
    <property type="match status" value="1"/>
</dbReference>
<dbReference type="PRINTS" id="PR00298">
    <property type="entry name" value="CHAPERONIN60"/>
</dbReference>
<dbReference type="SUPFAM" id="SSF52029">
    <property type="entry name" value="GroEL apical domain-like"/>
    <property type="match status" value="1"/>
</dbReference>
<dbReference type="SUPFAM" id="SSF48592">
    <property type="entry name" value="GroEL equatorial domain-like"/>
    <property type="match status" value="1"/>
</dbReference>
<dbReference type="SUPFAM" id="SSF54849">
    <property type="entry name" value="GroEL-intermediate domain like"/>
    <property type="match status" value="1"/>
</dbReference>
<dbReference type="PROSITE" id="PS00296">
    <property type="entry name" value="CHAPERONINS_CPN60"/>
    <property type="match status" value="1"/>
</dbReference>
<gene>
    <name evidence="1" type="primary">groEL</name>
    <name evidence="1" type="synonym">groL</name>
</gene>
<reference key="1">
    <citation type="journal article" date="2002" name="Mol. Biol. Evol.">
        <title>The evolution of the heat-shock protein GroEL from Buchnera, the primary endosymbiont of aphids, is governed by positive selection.</title>
        <authorList>
            <person name="Fares M.A."/>
            <person name="Barrio E."/>
            <person name="Sabater-Munoz B."/>
            <person name="Moya A."/>
        </authorList>
    </citation>
    <scope>NUCLEOTIDE SEQUENCE [GENOMIC DNA]</scope>
</reference>